<sequence length="229" mass="24962">MLHLVDYALLKPYLTLEEVARGARRAEELGVAAYCVNPLYAPYVRELLSRVKLCVVADFPFGAMPTAARAALVARIAEYAEEIDVVAPIGLVKSHMWGEVRRDLLSVVGAAGGRVVKVIVEEPYLTDEERHRLYDIVAESGAHFIKSSTGFAEEAYARQLGNPTYSTPERAAAIARYIRERGFRLGVKMAGGIRTAEQAKAIIDAIGFGTDPTKVRLGTSTPEALRTLG</sequence>
<name>DEOC_PYRNV</name>
<gene>
    <name evidence="1" type="primary">deoC</name>
    <name type="ordered locus">Tneu_0254</name>
</gene>
<protein>
    <recommendedName>
        <fullName evidence="1">Deoxyribose-phosphate aldolase</fullName>
        <shortName evidence="1">DERA</shortName>
        <ecNumber evidence="1">4.1.2.4</ecNumber>
    </recommendedName>
    <alternativeName>
        <fullName evidence="1">2-deoxy-D-ribose 5-phosphate aldolase</fullName>
    </alternativeName>
    <alternativeName>
        <fullName evidence="1">Phosphodeoxyriboaldolase</fullName>
        <shortName evidence="1">Deoxyriboaldolase</shortName>
    </alternativeName>
</protein>
<feature type="chain" id="PRO_1000094861" description="Deoxyribose-phosphate aldolase">
    <location>
        <begin position="1"/>
        <end position="229"/>
    </location>
</feature>
<feature type="active site" description="Proton donor/acceptor" evidence="1">
    <location>
        <position position="84"/>
    </location>
</feature>
<feature type="active site" description="Schiff-base intermediate with acetaldehyde" evidence="1">
    <location>
        <position position="146"/>
    </location>
</feature>
<feature type="active site" description="Proton donor/acceptor" evidence="1">
    <location>
        <position position="188"/>
    </location>
</feature>
<evidence type="ECO:0000255" key="1">
    <source>
        <dbReference type="HAMAP-Rule" id="MF_00114"/>
    </source>
</evidence>
<keyword id="KW-0963">Cytoplasm</keyword>
<keyword id="KW-0456">Lyase</keyword>
<keyword id="KW-0704">Schiff base</keyword>
<proteinExistence type="inferred from homology"/>
<dbReference type="EC" id="4.1.2.4" evidence="1"/>
<dbReference type="EMBL" id="CP001014">
    <property type="protein sequence ID" value="ACB39207.1"/>
    <property type="molecule type" value="Genomic_DNA"/>
</dbReference>
<dbReference type="RefSeq" id="WP_012349628.1">
    <property type="nucleotide sequence ID" value="NC_010525.1"/>
</dbReference>
<dbReference type="SMR" id="B1YB76"/>
<dbReference type="STRING" id="444157.Tneu_0254"/>
<dbReference type="GeneID" id="6166257"/>
<dbReference type="KEGG" id="tne:Tneu_0254"/>
<dbReference type="eggNOG" id="arCOG04320">
    <property type="taxonomic scope" value="Archaea"/>
</dbReference>
<dbReference type="HOGENOM" id="CLU_053595_0_2_2"/>
<dbReference type="OrthoDB" id="31145at2157"/>
<dbReference type="UniPathway" id="UPA00002">
    <property type="reaction ID" value="UER00468"/>
</dbReference>
<dbReference type="Proteomes" id="UP000001694">
    <property type="component" value="Chromosome"/>
</dbReference>
<dbReference type="GO" id="GO:0005737">
    <property type="term" value="C:cytoplasm"/>
    <property type="evidence" value="ECO:0007669"/>
    <property type="project" value="UniProtKB-SubCell"/>
</dbReference>
<dbReference type="GO" id="GO:0004139">
    <property type="term" value="F:deoxyribose-phosphate aldolase activity"/>
    <property type="evidence" value="ECO:0007669"/>
    <property type="project" value="UniProtKB-UniRule"/>
</dbReference>
<dbReference type="GO" id="GO:0006018">
    <property type="term" value="P:2-deoxyribose 1-phosphate catabolic process"/>
    <property type="evidence" value="ECO:0007669"/>
    <property type="project" value="UniProtKB-UniRule"/>
</dbReference>
<dbReference type="GO" id="GO:0016052">
    <property type="term" value="P:carbohydrate catabolic process"/>
    <property type="evidence" value="ECO:0007669"/>
    <property type="project" value="TreeGrafter"/>
</dbReference>
<dbReference type="GO" id="GO:0009264">
    <property type="term" value="P:deoxyribonucleotide catabolic process"/>
    <property type="evidence" value="ECO:0007669"/>
    <property type="project" value="InterPro"/>
</dbReference>
<dbReference type="CDD" id="cd00959">
    <property type="entry name" value="DeoC"/>
    <property type="match status" value="1"/>
</dbReference>
<dbReference type="Gene3D" id="3.20.20.70">
    <property type="entry name" value="Aldolase class I"/>
    <property type="match status" value="1"/>
</dbReference>
<dbReference type="HAMAP" id="MF_00114">
    <property type="entry name" value="DeoC_type1"/>
    <property type="match status" value="1"/>
</dbReference>
<dbReference type="InterPro" id="IPR013785">
    <property type="entry name" value="Aldolase_TIM"/>
</dbReference>
<dbReference type="InterPro" id="IPR011343">
    <property type="entry name" value="DeoC"/>
</dbReference>
<dbReference type="InterPro" id="IPR002915">
    <property type="entry name" value="DeoC/FbaB/LacD_aldolase"/>
</dbReference>
<dbReference type="InterPro" id="IPR028581">
    <property type="entry name" value="DeoC_typeI"/>
</dbReference>
<dbReference type="NCBIfam" id="TIGR00126">
    <property type="entry name" value="deoC"/>
    <property type="match status" value="1"/>
</dbReference>
<dbReference type="PANTHER" id="PTHR10889">
    <property type="entry name" value="DEOXYRIBOSE-PHOSPHATE ALDOLASE"/>
    <property type="match status" value="1"/>
</dbReference>
<dbReference type="PANTHER" id="PTHR10889:SF1">
    <property type="entry name" value="DEOXYRIBOSE-PHOSPHATE ALDOLASE"/>
    <property type="match status" value="1"/>
</dbReference>
<dbReference type="PIRSF" id="PIRSF001357">
    <property type="entry name" value="DeoC"/>
    <property type="match status" value="1"/>
</dbReference>
<dbReference type="SMART" id="SM01133">
    <property type="entry name" value="DeoC"/>
    <property type="match status" value="1"/>
</dbReference>
<dbReference type="SUPFAM" id="SSF51569">
    <property type="entry name" value="Aldolase"/>
    <property type="match status" value="1"/>
</dbReference>
<organism>
    <name type="scientific">Pyrobaculum neutrophilum (strain DSM 2338 / JCM 9278 / NBRC 100436 / V24Sta)</name>
    <name type="common">Thermoproteus neutrophilus</name>
    <dbReference type="NCBI Taxonomy" id="444157"/>
    <lineage>
        <taxon>Archaea</taxon>
        <taxon>Thermoproteota</taxon>
        <taxon>Thermoprotei</taxon>
        <taxon>Thermoproteales</taxon>
        <taxon>Thermoproteaceae</taxon>
        <taxon>Pyrobaculum</taxon>
    </lineage>
</organism>
<reference key="1">
    <citation type="submission" date="2008-03" db="EMBL/GenBank/DDBJ databases">
        <title>Complete sequence of Thermoproteus neutrophilus V24Sta.</title>
        <authorList>
            <consortium name="US DOE Joint Genome Institute"/>
            <person name="Copeland A."/>
            <person name="Lucas S."/>
            <person name="Lapidus A."/>
            <person name="Glavina del Rio T."/>
            <person name="Dalin E."/>
            <person name="Tice H."/>
            <person name="Bruce D."/>
            <person name="Goodwin L."/>
            <person name="Pitluck S."/>
            <person name="Sims D."/>
            <person name="Brettin T."/>
            <person name="Detter J.C."/>
            <person name="Han C."/>
            <person name="Kuske C.R."/>
            <person name="Schmutz J."/>
            <person name="Larimer F."/>
            <person name="Land M."/>
            <person name="Hauser L."/>
            <person name="Kyrpides N."/>
            <person name="Mikhailova N."/>
            <person name="Biddle J.F."/>
            <person name="Zhang Z."/>
            <person name="Fitz-Gibbon S.T."/>
            <person name="Lowe T.M."/>
            <person name="Saltikov C."/>
            <person name="House C.H."/>
            <person name="Richardson P."/>
        </authorList>
    </citation>
    <scope>NUCLEOTIDE SEQUENCE [LARGE SCALE GENOMIC DNA]</scope>
    <source>
        <strain>DSM 2338 / JCM 9278 / NBRC 100436 / V24Sta</strain>
    </source>
</reference>
<accession>B1YB76</accession>
<comment type="function">
    <text evidence="1">Catalyzes a reversible aldol reaction between acetaldehyde and D-glyceraldehyde 3-phosphate to generate 2-deoxy-D-ribose 5-phosphate.</text>
</comment>
<comment type="catalytic activity">
    <reaction evidence="1">
        <text>2-deoxy-D-ribose 5-phosphate = D-glyceraldehyde 3-phosphate + acetaldehyde</text>
        <dbReference type="Rhea" id="RHEA:12821"/>
        <dbReference type="ChEBI" id="CHEBI:15343"/>
        <dbReference type="ChEBI" id="CHEBI:59776"/>
        <dbReference type="ChEBI" id="CHEBI:62877"/>
        <dbReference type="EC" id="4.1.2.4"/>
    </reaction>
</comment>
<comment type="pathway">
    <text evidence="1">Carbohydrate degradation; 2-deoxy-D-ribose 1-phosphate degradation; D-glyceraldehyde 3-phosphate and acetaldehyde from 2-deoxy-alpha-D-ribose 1-phosphate: step 2/2.</text>
</comment>
<comment type="subcellular location">
    <subcellularLocation>
        <location evidence="1">Cytoplasm</location>
    </subcellularLocation>
</comment>
<comment type="similarity">
    <text evidence="1">Belongs to the DeoC/FbaB aldolase family. DeoC type 1 subfamily.</text>
</comment>